<sequence length="170" mass="19098">MLSYYAFIFFAKIMEVALMTIRTVLITRGEKLYGSIIGFIEVTIWLYVTSSVLSGIKDDPIRMVVYALGFTCGNYMGCVIEEKLAIGLLTINVITSESDGKRLAEILRDENVGVTMVDAEGKIEQKKMLIIHAKRKRREEIIRTIEGSDINAMISVNDIKTVYGGYGIRK</sequence>
<evidence type="ECO:0000255" key="1">
    <source>
        <dbReference type="HAMAP-Rule" id="MF_01515"/>
    </source>
</evidence>
<accession>C1FT66</accession>
<protein>
    <recommendedName>
        <fullName evidence="1">UPF0316 protein CLM_0701</fullName>
    </recommendedName>
</protein>
<proteinExistence type="inferred from homology"/>
<reference key="1">
    <citation type="submission" date="2008-10" db="EMBL/GenBank/DDBJ databases">
        <title>Genome sequence of Clostridium botulinum A2 Kyoto.</title>
        <authorList>
            <person name="Shrivastava S."/>
            <person name="Brinkac L.M."/>
            <person name="Brown J.L."/>
            <person name="Bruce D."/>
            <person name="Detter C.C."/>
            <person name="Johnson E.A."/>
            <person name="Munk C.A."/>
            <person name="Smith L.A."/>
            <person name="Smith T.J."/>
            <person name="Sutton G."/>
            <person name="Brettin T.S."/>
        </authorList>
    </citation>
    <scope>NUCLEOTIDE SEQUENCE [LARGE SCALE GENOMIC DNA]</scope>
    <source>
        <strain>Kyoto / Type A2</strain>
    </source>
</reference>
<comment type="subcellular location">
    <subcellularLocation>
        <location evidence="1">Cell membrane</location>
        <topology evidence="1">Multi-pass membrane protein</topology>
    </subcellularLocation>
</comment>
<comment type="similarity">
    <text evidence="1">Belongs to the UPF0316 family.</text>
</comment>
<dbReference type="EMBL" id="CP001581">
    <property type="protein sequence ID" value="ACO84936.1"/>
    <property type="molecule type" value="Genomic_DNA"/>
</dbReference>
<dbReference type="RefSeq" id="WP_003357138.1">
    <property type="nucleotide sequence ID" value="NC_012563.1"/>
</dbReference>
<dbReference type="SMR" id="C1FT66"/>
<dbReference type="KEGG" id="cby:CLM_0701"/>
<dbReference type="eggNOG" id="COG4843">
    <property type="taxonomic scope" value="Bacteria"/>
</dbReference>
<dbReference type="HOGENOM" id="CLU_106166_0_0_9"/>
<dbReference type="Proteomes" id="UP000001374">
    <property type="component" value="Chromosome"/>
</dbReference>
<dbReference type="GO" id="GO:0005886">
    <property type="term" value="C:plasma membrane"/>
    <property type="evidence" value="ECO:0007669"/>
    <property type="project" value="UniProtKB-SubCell"/>
</dbReference>
<dbReference type="CDD" id="cd16381">
    <property type="entry name" value="YitT_C_like_1"/>
    <property type="match status" value="1"/>
</dbReference>
<dbReference type="HAMAP" id="MF_01515">
    <property type="entry name" value="UPF0316"/>
    <property type="match status" value="1"/>
</dbReference>
<dbReference type="InterPro" id="IPR019264">
    <property type="entry name" value="DUF2179"/>
</dbReference>
<dbReference type="InterPro" id="IPR044035">
    <property type="entry name" value="DUF5698"/>
</dbReference>
<dbReference type="InterPro" id="IPR022930">
    <property type="entry name" value="UPF0316"/>
</dbReference>
<dbReference type="PANTHER" id="PTHR40060">
    <property type="entry name" value="UPF0316 PROTEIN YEBE"/>
    <property type="match status" value="1"/>
</dbReference>
<dbReference type="PANTHER" id="PTHR40060:SF1">
    <property type="entry name" value="UPF0316 PROTEIN YEBE"/>
    <property type="match status" value="1"/>
</dbReference>
<dbReference type="Pfam" id="PF10035">
    <property type="entry name" value="DUF2179"/>
    <property type="match status" value="1"/>
</dbReference>
<dbReference type="Pfam" id="PF18955">
    <property type="entry name" value="DUF5698"/>
    <property type="match status" value="1"/>
</dbReference>
<gene>
    <name type="ordered locus">CLM_0701</name>
</gene>
<feature type="chain" id="PRO_1000185071" description="UPF0316 protein CLM_0701">
    <location>
        <begin position="1"/>
        <end position="170"/>
    </location>
</feature>
<feature type="transmembrane region" description="Helical" evidence="1">
    <location>
        <begin position="1"/>
        <end position="21"/>
    </location>
</feature>
<feature type="transmembrane region" description="Helical" evidence="1">
    <location>
        <begin position="36"/>
        <end position="56"/>
    </location>
</feature>
<keyword id="KW-1003">Cell membrane</keyword>
<keyword id="KW-0472">Membrane</keyword>
<keyword id="KW-0812">Transmembrane</keyword>
<keyword id="KW-1133">Transmembrane helix</keyword>
<organism>
    <name type="scientific">Clostridium botulinum (strain Kyoto / Type A2)</name>
    <dbReference type="NCBI Taxonomy" id="536232"/>
    <lineage>
        <taxon>Bacteria</taxon>
        <taxon>Bacillati</taxon>
        <taxon>Bacillota</taxon>
        <taxon>Clostridia</taxon>
        <taxon>Eubacteriales</taxon>
        <taxon>Clostridiaceae</taxon>
        <taxon>Clostridium</taxon>
    </lineage>
</organism>
<name>Y701_CLOBJ</name>